<gene>
    <name evidence="1" type="primary">rplR</name>
    <name type="ordered locus">Shew_0174</name>
</gene>
<proteinExistence type="inferred from homology"/>
<name>RL18_SHELP</name>
<sequence>MDKKTSRLRRATRARKKIQELGVNRLVVHRTPRHTYAQVIDANAQVVAAASTAEKAVSEQLKYTGNVEAAKAVGKTIAERAIEKGVTVVAFDRSGFKYHGRVAALADAAREAGLQF</sequence>
<protein>
    <recommendedName>
        <fullName evidence="1">Large ribosomal subunit protein uL18</fullName>
    </recommendedName>
    <alternativeName>
        <fullName evidence="2">50S ribosomal protein L18</fullName>
    </alternativeName>
</protein>
<accession>A3Q998</accession>
<feature type="chain" id="PRO_1000053108" description="Large ribosomal subunit protein uL18">
    <location>
        <begin position="1"/>
        <end position="116"/>
    </location>
</feature>
<dbReference type="EMBL" id="CP000606">
    <property type="protein sequence ID" value="ABO22046.1"/>
    <property type="molecule type" value="Genomic_DNA"/>
</dbReference>
<dbReference type="RefSeq" id="WP_011863982.1">
    <property type="nucleotide sequence ID" value="NC_009092.1"/>
</dbReference>
<dbReference type="SMR" id="A3Q998"/>
<dbReference type="STRING" id="323850.Shew_0174"/>
<dbReference type="KEGG" id="slo:Shew_0174"/>
<dbReference type="eggNOG" id="COG0256">
    <property type="taxonomic scope" value="Bacteria"/>
</dbReference>
<dbReference type="HOGENOM" id="CLU_098841_0_1_6"/>
<dbReference type="OrthoDB" id="9810939at2"/>
<dbReference type="Proteomes" id="UP000001558">
    <property type="component" value="Chromosome"/>
</dbReference>
<dbReference type="GO" id="GO:0022625">
    <property type="term" value="C:cytosolic large ribosomal subunit"/>
    <property type="evidence" value="ECO:0007669"/>
    <property type="project" value="TreeGrafter"/>
</dbReference>
<dbReference type="GO" id="GO:0008097">
    <property type="term" value="F:5S rRNA binding"/>
    <property type="evidence" value="ECO:0007669"/>
    <property type="project" value="TreeGrafter"/>
</dbReference>
<dbReference type="GO" id="GO:0003735">
    <property type="term" value="F:structural constituent of ribosome"/>
    <property type="evidence" value="ECO:0007669"/>
    <property type="project" value="InterPro"/>
</dbReference>
<dbReference type="GO" id="GO:0006412">
    <property type="term" value="P:translation"/>
    <property type="evidence" value="ECO:0007669"/>
    <property type="project" value="UniProtKB-UniRule"/>
</dbReference>
<dbReference type="CDD" id="cd00432">
    <property type="entry name" value="Ribosomal_L18_L5e"/>
    <property type="match status" value="1"/>
</dbReference>
<dbReference type="FunFam" id="3.30.420.100:FF:000001">
    <property type="entry name" value="50S ribosomal protein L18"/>
    <property type="match status" value="1"/>
</dbReference>
<dbReference type="Gene3D" id="3.30.420.100">
    <property type="match status" value="1"/>
</dbReference>
<dbReference type="HAMAP" id="MF_01337_B">
    <property type="entry name" value="Ribosomal_uL18_B"/>
    <property type="match status" value="1"/>
</dbReference>
<dbReference type="InterPro" id="IPR004389">
    <property type="entry name" value="Ribosomal_uL18_bac-type"/>
</dbReference>
<dbReference type="InterPro" id="IPR005484">
    <property type="entry name" value="Ribosomal_uL18_bac/euk"/>
</dbReference>
<dbReference type="NCBIfam" id="TIGR00060">
    <property type="entry name" value="L18_bact"/>
    <property type="match status" value="1"/>
</dbReference>
<dbReference type="PANTHER" id="PTHR12899">
    <property type="entry name" value="39S RIBOSOMAL PROTEIN L18, MITOCHONDRIAL"/>
    <property type="match status" value="1"/>
</dbReference>
<dbReference type="PANTHER" id="PTHR12899:SF3">
    <property type="entry name" value="LARGE RIBOSOMAL SUBUNIT PROTEIN UL18M"/>
    <property type="match status" value="1"/>
</dbReference>
<dbReference type="Pfam" id="PF00861">
    <property type="entry name" value="Ribosomal_L18p"/>
    <property type="match status" value="1"/>
</dbReference>
<dbReference type="SUPFAM" id="SSF53137">
    <property type="entry name" value="Translational machinery components"/>
    <property type="match status" value="1"/>
</dbReference>
<keyword id="KW-1185">Reference proteome</keyword>
<keyword id="KW-0687">Ribonucleoprotein</keyword>
<keyword id="KW-0689">Ribosomal protein</keyword>
<keyword id="KW-0694">RNA-binding</keyword>
<keyword id="KW-0699">rRNA-binding</keyword>
<organism>
    <name type="scientific">Shewanella loihica (strain ATCC BAA-1088 / PV-4)</name>
    <dbReference type="NCBI Taxonomy" id="323850"/>
    <lineage>
        <taxon>Bacteria</taxon>
        <taxon>Pseudomonadati</taxon>
        <taxon>Pseudomonadota</taxon>
        <taxon>Gammaproteobacteria</taxon>
        <taxon>Alteromonadales</taxon>
        <taxon>Shewanellaceae</taxon>
        <taxon>Shewanella</taxon>
    </lineage>
</organism>
<comment type="function">
    <text evidence="1">This is one of the proteins that bind and probably mediate the attachment of the 5S RNA into the large ribosomal subunit, where it forms part of the central protuberance.</text>
</comment>
<comment type="subunit">
    <text evidence="1">Part of the 50S ribosomal subunit; part of the 5S rRNA/L5/L18/L25 subcomplex. Contacts the 5S and 23S rRNAs.</text>
</comment>
<comment type="similarity">
    <text evidence="1">Belongs to the universal ribosomal protein uL18 family.</text>
</comment>
<reference key="1">
    <citation type="submission" date="2007-03" db="EMBL/GenBank/DDBJ databases">
        <title>Complete sequence of Shewanella loihica PV-4.</title>
        <authorList>
            <consortium name="US DOE Joint Genome Institute"/>
            <person name="Copeland A."/>
            <person name="Lucas S."/>
            <person name="Lapidus A."/>
            <person name="Barry K."/>
            <person name="Detter J.C."/>
            <person name="Glavina del Rio T."/>
            <person name="Hammon N."/>
            <person name="Israni S."/>
            <person name="Dalin E."/>
            <person name="Tice H."/>
            <person name="Pitluck S."/>
            <person name="Chain P."/>
            <person name="Malfatti S."/>
            <person name="Shin M."/>
            <person name="Vergez L."/>
            <person name="Schmutz J."/>
            <person name="Larimer F."/>
            <person name="Land M."/>
            <person name="Hauser L."/>
            <person name="Kyrpides N."/>
            <person name="Mikhailova N."/>
            <person name="Romine M.F."/>
            <person name="Serres G."/>
            <person name="Fredrickson J."/>
            <person name="Tiedje J."/>
            <person name="Richardson P."/>
        </authorList>
    </citation>
    <scope>NUCLEOTIDE SEQUENCE [LARGE SCALE GENOMIC DNA]</scope>
    <source>
        <strain>ATCC BAA-1088 / PV-4</strain>
    </source>
</reference>
<evidence type="ECO:0000255" key="1">
    <source>
        <dbReference type="HAMAP-Rule" id="MF_01337"/>
    </source>
</evidence>
<evidence type="ECO:0000305" key="2"/>